<accession>Q7W2F6</accession>
<protein>
    <recommendedName>
        <fullName evidence="1">Large ribosomal subunit protein uL3</fullName>
    </recommendedName>
    <alternativeName>
        <fullName evidence="3">50S ribosomal protein L3</fullName>
    </alternativeName>
</protein>
<reference key="1">
    <citation type="journal article" date="2003" name="Nat. Genet.">
        <title>Comparative analysis of the genome sequences of Bordetella pertussis, Bordetella parapertussis and Bordetella bronchiseptica.</title>
        <authorList>
            <person name="Parkhill J."/>
            <person name="Sebaihia M."/>
            <person name="Preston A."/>
            <person name="Murphy L.D."/>
            <person name="Thomson N.R."/>
            <person name="Harris D.E."/>
            <person name="Holden M.T.G."/>
            <person name="Churcher C.M."/>
            <person name="Bentley S.D."/>
            <person name="Mungall K.L."/>
            <person name="Cerdeno-Tarraga A.-M."/>
            <person name="Temple L."/>
            <person name="James K.D."/>
            <person name="Harris B."/>
            <person name="Quail M.A."/>
            <person name="Achtman M."/>
            <person name="Atkin R."/>
            <person name="Baker S."/>
            <person name="Basham D."/>
            <person name="Bason N."/>
            <person name="Cherevach I."/>
            <person name="Chillingworth T."/>
            <person name="Collins M."/>
            <person name="Cronin A."/>
            <person name="Davis P."/>
            <person name="Doggett J."/>
            <person name="Feltwell T."/>
            <person name="Goble A."/>
            <person name="Hamlin N."/>
            <person name="Hauser H."/>
            <person name="Holroyd S."/>
            <person name="Jagels K."/>
            <person name="Leather S."/>
            <person name="Moule S."/>
            <person name="Norberczak H."/>
            <person name="O'Neil S."/>
            <person name="Ormond D."/>
            <person name="Price C."/>
            <person name="Rabbinowitsch E."/>
            <person name="Rutter S."/>
            <person name="Sanders M."/>
            <person name="Saunders D."/>
            <person name="Seeger K."/>
            <person name="Sharp S."/>
            <person name="Simmonds M."/>
            <person name="Skelton J."/>
            <person name="Squares R."/>
            <person name="Squares S."/>
            <person name="Stevens K."/>
            <person name="Unwin L."/>
            <person name="Whitehead S."/>
            <person name="Barrell B.G."/>
            <person name="Maskell D.J."/>
        </authorList>
    </citation>
    <scope>NUCLEOTIDE SEQUENCE [LARGE SCALE GENOMIC DNA]</scope>
    <source>
        <strain>12822 / ATCC BAA-587 / NCTC 13253</strain>
    </source>
</reference>
<sequence>MEKTMSNSTPTPAAHRLGLVGRKVGMTRIFTEDGESIPVTVLDVSNNRVTQVKSLESDGYAAIQVTYGTRRATRVVKPQAGHYAKAGAEAGSILKEFRLDPARAAEFAAGAVIAVESVFEAGQQVDVTGTSIGKGFAGTIKRHNFGSQRASHGNSRSHRVPGSIGQAQDPGRIFPGKRMSGHMGDVTRTVQNLDVVRVDAERGLLMVKGAVPGHAGGDVIVRPAVKAPAKKGA</sequence>
<feature type="chain" id="PRO_0000077071" description="Large ribosomal subunit protein uL3">
    <location>
        <begin position="1"/>
        <end position="233"/>
    </location>
</feature>
<feature type="region of interest" description="Disordered" evidence="2">
    <location>
        <begin position="146"/>
        <end position="171"/>
    </location>
</feature>
<feature type="modified residue" description="N5-methylglutamine" evidence="1">
    <location>
        <position position="168"/>
    </location>
</feature>
<dbReference type="EMBL" id="BX640423">
    <property type="protein sequence ID" value="CAE39770.1"/>
    <property type="molecule type" value="Genomic_DNA"/>
</dbReference>
<dbReference type="SMR" id="Q7W2F6"/>
<dbReference type="KEGG" id="bpa:BPP0029"/>
<dbReference type="HOGENOM" id="CLU_044142_4_1_4"/>
<dbReference type="Proteomes" id="UP000001421">
    <property type="component" value="Chromosome"/>
</dbReference>
<dbReference type="GO" id="GO:0022625">
    <property type="term" value="C:cytosolic large ribosomal subunit"/>
    <property type="evidence" value="ECO:0007669"/>
    <property type="project" value="TreeGrafter"/>
</dbReference>
<dbReference type="GO" id="GO:0019843">
    <property type="term" value="F:rRNA binding"/>
    <property type="evidence" value="ECO:0007669"/>
    <property type="project" value="UniProtKB-UniRule"/>
</dbReference>
<dbReference type="GO" id="GO:0003735">
    <property type="term" value="F:structural constituent of ribosome"/>
    <property type="evidence" value="ECO:0007669"/>
    <property type="project" value="InterPro"/>
</dbReference>
<dbReference type="GO" id="GO:0006412">
    <property type="term" value="P:translation"/>
    <property type="evidence" value="ECO:0007669"/>
    <property type="project" value="UniProtKB-UniRule"/>
</dbReference>
<dbReference type="FunFam" id="2.40.30.10:FF:000004">
    <property type="entry name" value="50S ribosomal protein L3"/>
    <property type="match status" value="1"/>
</dbReference>
<dbReference type="FunFam" id="3.30.160.810:FF:000001">
    <property type="entry name" value="50S ribosomal protein L3"/>
    <property type="match status" value="1"/>
</dbReference>
<dbReference type="Gene3D" id="3.30.160.810">
    <property type="match status" value="1"/>
</dbReference>
<dbReference type="Gene3D" id="2.40.30.10">
    <property type="entry name" value="Translation factors"/>
    <property type="match status" value="1"/>
</dbReference>
<dbReference type="HAMAP" id="MF_01325_B">
    <property type="entry name" value="Ribosomal_uL3_B"/>
    <property type="match status" value="1"/>
</dbReference>
<dbReference type="InterPro" id="IPR000597">
    <property type="entry name" value="Ribosomal_uL3"/>
</dbReference>
<dbReference type="InterPro" id="IPR019927">
    <property type="entry name" value="Ribosomal_uL3_bac/org-type"/>
</dbReference>
<dbReference type="InterPro" id="IPR019926">
    <property type="entry name" value="Ribosomal_uL3_CS"/>
</dbReference>
<dbReference type="InterPro" id="IPR009000">
    <property type="entry name" value="Transl_B-barrel_sf"/>
</dbReference>
<dbReference type="NCBIfam" id="TIGR03625">
    <property type="entry name" value="L3_bact"/>
    <property type="match status" value="1"/>
</dbReference>
<dbReference type="PANTHER" id="PTHR11229">
    <property type="entry name" value="50S RIBOSOMAL PROTEIN L3"/>
    <property type="match status" value="1"/>
</dbReference>
<dbReference type="PANTHER" id="PTHR11229:SF16">
    <property type="entry name" value="LARGE RIBOSOMAL SUBUNIT PROTEIN UL3C"/>
    <property type="match status" value="1"/>
</dbReference>
<dbReference type="Pfam" id="PF00297">
    <property type="entry name" value="Ribosomal_L3"/>
    <property type="match status" value="1"/>
</dbReference>
<dbReference type="SUPFAM" id="SSF50447">
    <property type="entry name" value="Translation proteins"/>
    <property type="match status" value="1"/>
</dbReference>
<dbReference type="PROSITE" id="PS00474">
    <property type="entry name" value="RIBOSOMAL_L3"/>
    <property type="match status" value="1"/>
</dbReference>
<keyword id="KW-0488">Methylation</keyword>
<keyword id="KW-0687">Ribonucleoprotein</keyword>
<keyword id="KW-0689">Ribosomal protein</keyword>
<keyword id="KW-0694">RNA-binding</keyword>
<keyword id="KW-0699">rRNA-binding</keyword>
<name>RL3_BORPA</name>
<gene>
    <name evidence="1" type="primary">rplC</name>
    <name type="ordered locus">BPP0029</name>
</gene>
<evidence type="ECO:0000255" key="1">
    <source>
        <dbReference type="HAMAP-Rule" id="MF_01325"/>
    </source>
</evidence>
<evidence type="ECO:0000256" key="2">
    <source>
        <dbReference type="SAM" id="MobiDB-lite"/>
    </source>
</evidence>
<evidence type="ECO:0000305" key="3"/>
<proteinExistence type="inferred from homology"/>
<organism>
    <name type="scientific">Bordetella parapertussis (strain 12822 / ATCC BAA-587 / NCTC 13253)</name>
    <dbReference type="NCBI Taxonomy" id="257311"/>
    <lineage>
        <taxon>Bacteria</taxon>
        <taxon>Pseudomonadati</taxon>
        <taxon>Pseudomonadota</taxon>
        <taxon>Betaproteobacteria</taxon>
        <taxon>Burkholderiales</taxon>
        <taxon>Alcaligenaceae</taxon>
        <taxon>Bordetella</taxon>
    </lineage>
</organism>
<comment type="function">
    <text evidence="1">One of the primary rRNA binding proteins, it binds directly near the 3'-end of the 23S rRNA, where it nucleates assembly of the 50S subunit.</text>
</comment>
<comment type="subunit">
    <text evidence="1">Part of the 50S ribosomal subunit. Forms a cluster with proteins L14 and L19.</text>
</comment>
<comment type="PTM">
    <text evidence="1">Methylated by PrmB.</text>
</comment>
<comment type="similarity">
    <text evidence="1">Belongs to the universal ribosomal protein uL3 family.</text>
</comment>